<accession>B4H581</accession>
<gene>
    <name type="primary">cbx</name>
    <name type="ORF">GL10235</name>
</gene>
<name>AKTP1_DROPE</name>
<protein>
    <recommendedName>
        <fullName>Protein crossbronx</fullName>
    </recommendedName>
</protein>
<organism>
    <name type="scientific">Drosophila persimilis</name>
    <name type="common">Fruit fly</name>
    <dbReference type="NCBI Taxonomy" id="7234"/>
    <lineage>
        <taxon>Eukaryota</taxon>
        <taxon>Metazoa</taxon>
        <taxon>Ecdysozoa</taxon>
        <taxon>Arthropoda</taxon>
        <taxon>Hexapoda</taxon>
        <taxon>Insecta</taxon>
        <taxon>Pterygota</taxon>
        <taxon>Neoptera</taxon>
        <taxon>Endopterygota</taxon>
        <taxon>Diptera</taxon>
        <taxon>Brachycera</taxon>
        <taxon>Muscomorpha</taxon>
        <taxon>Ephydroidea</taxon>
        <taxon>Drosophilidae</taxon>
        <taxon>Drosophila</taxon>
        <taxon>Sophophora</taxon>
    </lineage>
</organism>
<keyword id="KW-1185">Reference proteome</keyword>
<comment type="similarity">
    <text evidence="1">Belongs to the ubiquitin-conjugating enzyme family. FTS subfamily.</text>
</comment>
<comment type="caution">
    <text evidence="2">Lacks the conserved Cys residue necessary for ubiquitin-conjugating enzyme E2 activity.</text>
</comment>
<reference key="1">
    <citation type="journal article" date="2007" name="Nature">
        <title>Evolution of genes and genomes on the Drosophila phylogeny.</title>
        <authorList>
            <consortium name="Drosophila 12 genomes consortium"/>
        </authorList>
    </citation>
    <scope>NUCLEOTIDE SEQUENCE [LARGE SCALE GENOMIC DNA]</scope>
    <source>
        <strain>MSH-3 / Tucson 14011-0111.49</strain>
    </source>
</reference>
<dbReference type="EMBL" id="CH479210">
    <property type="protein sequence ID" value="EDW32917.1"/>
    <property type="molecule type" value="Genomic_DNA"/>
</dbReference>
<dbReference type="SMR" id="B4H581"/>
<dbReference type="STRING" id="7234.B4H581"/>
<dbReference type="EnsemblMetazoa" id="FBtr0175850">
    <property type="protein sequence ID" value="FBpp0174342"/>
    <property type="gene ID" value="FBgn0147845"/>
</dbReference>
<dbReference type="EnsemblMetazoa" id="XM_002025974.2">
    <property type="protein sequence ID" value="XP_002026010.1"/>
    <property type="gene ID" value="LOC6600972"/>
</dbReference>
<dbReference type="GeneID" id="6600972"/>
<dbReference type="KEGG" id="dpe:6600972"/>
<dbReference type="CTD" id="47272"/>
<dbReference type="eggNOG" id="KOG0429">
    <property type="taxonomic scope" value="Eukaryota"/>
</dbReference>
<dbReference type="HOGENOM" id="CLU_083049_1_0_1"/>
<dbReference type="OMA" id="WGFPEWR"/>
<dbReference type="OrthoDB" id="5596422at2759"/>
<dbReference type="PhylomeDB" id="B4H581"/>
<dbReference type="ChiTaRS" id="Ubx">
    <property type="organism name" value="fly"/>
</dbReference>
<dbReference type="Proteomes" id="UP000008744">
    <property type="component" value="Unassembled WGS sequence"/>
</dbReference>
<dbReference type="CDD" id="cd23814">
    <property type="entry name" value="UEV_AKTIP"/>
    <property type="match status" value="1"/>
</dbReference>
<dbReference type="FunFam" id="3.10.110.10:FF:000121">
    <property type="entry name" value="Protein crossbronx"/>
    <property type="match status" value="1"/>
</dbReference>
<dbReference type="Gene3D" id="3.10.110.10">
    <property type="entry name" value="Ubiquitin Conjugating Enzyme"/>
    <property type="match status" value="1"/>
</dbReference>
<dbReference type="InterPro" id="IPR000608">
    <property type="entry name" value="UBQ-conjugat_E2_core"/>
</dbReference>
<dbReference type="InterPro" id="IPR016135">
    <property type="entry name" value="UBQ-conjugating_enzyme/RWD"/>
</dbReference>
<dbReference type="Pfam" id="PF00179">
    <property type="entry name" value="UQ_con"/>
    <property type="match status" value="1"/>
</dbReference>
<dbReference type="SMART" id="SM00212">
    <property type="entry name" value="UBCc"/>
    <property type="match status" value="1"/>
</dbReference>
<dbReference type="SUPFAM" id="SSF54495">
    <property type="entry name" value="UBC-like"/>
    <property type="match status" value="1"/>
</dbReference>
<dbReference type="PROSITE" id="PS50127">
    <property type="entry name" value="UBC_2"/>
    <property type="match status" value="1"/>
</dbReference>
<sequence>MTLDLDANKKDDKILITTIQQEYKILAEYKMIESEKLGGIYTIPSLANSLQWFGVFFGRQGLYSESVFRFSLLLPDRFPDDKSLPTVIFQQNILHPHVCPYTNSLDISHAFPEWRCGEDHLWQLFKYMQAIFSDPIDSIRGIEMDKIKNPEAAELLLTNREEFAARVLENIKESKEHIYDPQPTEDPHYIVFEKFQPDVHGPVLERIKAGRNNQTDSTLQQTNGGTATGLSWVKEGEFKPLSIE</sequence>
<evidence type="ECO:0000255" key="1">
    <source>
        <dbReference type="PROSITE-ProRule" id="PRU00388"/>
    </source>
</evidence>
<evidence type="ECO:0000305" key="2"/>
<feature type="chain" id="PRO_0000379034" description="Protein crossbronx">
    <location>
        <begin position="1"/>
        <end position="244"/>
    </location>
</feature>
<feature type="domain" description="UBC core" evidence="1">
    <location>
        <begin position="20"/>
        <end position="176"/>
    </location>
</feature>
<proteinExistence type="inferred from homology"/>